<feature type="chain" id="PRO_0000049456" description="Uncharacterized protein YbbK">
    <location>
        <begin position="1"/>
        <end position="151"/>
    </location>
</feature>
<feature type="sequence conflict" description="In Ref. 1; BAA19506." evidence="1" ref="1">
    <original>E</original>
    <variation>G</variation>
    <location>
        <position position="144"/>
    </location>
</feature>
<sequence>MILVSSCLGGIECRYNGSHAASEKIRKLVDEKKAVMACPELLGGFSTPREPAEIIGGTGEDVLNGTAKIVTASGEDVTELYMEGAAKTLAYAKEINASAVILKENSPSCGSGFIYNGTFSGKKITGSGVTAALLKQAGYRVISENELNDIL</sequence>
<name>YBBK_BACSU</name>
<reference key="1">
    <citation type="journal article" date="1997" name="Microbiology">
        <title>Sequence and analysis of a 31 kb segment of the Bacillus subtilis chromosome in the area of the rrnH and rrnG operons.</title>
        <authorList>
            <person name="Liu H."/>
            <person name="Haga K."/>
            <person name="Yasumoto K."/>
            <person name="Ohashi Y."/>
            <person name="Yoshikawa H."/>
            <person name="Takahashi H."/>
        </authorList>
    </citation>
    <scope>NUCLEOTIDE SEQUENCE [GENOMIC DNA]</scope>
    <source>
        <strain>168</strain>
    </source>
</reference>
<reference key="2">
    <citation type="journal article" date="1997" name="Nature">
        <title>The complete genome sequence of the Gram-positive bacterium Bacillus subtilis.</title>
        <authorList>
            <person name="Kunst F."/>
            <person name="Ogasawara N."/>
            <person name="Moszer I."/>
            <person name="Albertini A.M."/>
            <person name="Alloni G."/>
            <person name="Azevedo V."/>
            <person name="Bertero M.G."/>
            <person name="Bessieres P."/>
            <person name="Bolotin A."/>
            <person name="Borchert S."/>
            <person name="Borriss R."/>
            <person name="Boursier L."/>
            <person name="Brans A."/>
            <person name="Braun M."/>
            <person name="Brignell S.C."/>
            <person name="Bron S."/>
            <person name="Brouillet S."/>
            <person name="Bruschi C.V."/>
            <person name="Caldwell B."/>
            <person name="Capuano V."/>
            <person name="Carter N.M."/>
            <person name="Choi S.-K."/>
            <person name="Codani J.-J."/>
            <person name="Connerton I.F."/>
            <person name="Cummings N.J."/>
            <person name="Daniel R.A."/>
            <person name="Denizot F."/>
            <person name="Devine K.M."/>
            <person name="Duesterhoeft A."/>
            <person name="Ehrlich S.D."/>
            <person name="Emmerson P.T."/>
            <person name="Entian K.-D."/>
            <person name="Errington J."/>
            <person name="Fabret C."/>
            <person name="Ferrari E."/>
            <person name="Foulger D."/>
            <person name="Fritz C."/>
            <person name="Fujita M."/>
            <person name="Fujita Y."/>
            <person name="Fuma S."/>
            <person name="Galizzi A."/>
            <person name="Galleron N."/>
            <person name="Ghim S.-Y."/>
            <person name="Glaser P."/>
            <person name="Goffeau A."/>
            <person name="Golightly E.J."/>
            <person name="Grandi G."/>
            <person name="Guiseppi G."/>
            <person name="Guy B.J."/>
            <person name="Haga K."/>
            <person name="Haiech J."/>
            <person name="Harwood C.R."/>
            <person name="Henaut A."/>
            <person name="Hilbert H."/>
            <person name="Holsappel S."/>
            <person name="Hosono S."/>
            <person name="Hullo M.-F."/>
            <person name="Itaya M."/>
            <person name="Jones L.-M."/>
            <person name="Joris B."/>
            <person name="Karamata D."/>
            <person name="Kasahara Y."/>
            <person name="Klaerr-Blanchard M."/>
            <person name="Klein C."/>
            <person name="Kobayashi Y."/>
            <person name="Koetter P."/>
            <person name="Koningstein G."/>
            <person name="Krogh S."/>
            <person name="Kumano M."/>
            <person name="Kurita K."/>
            <person name="Lapidus A."/>
            <person name="Lardinois S."/>
            <person name="Lauber J."/>
            <person name="Lazarevic V."/>
            <person name="Lee S.-M."/>
            <person name="Levine A."/>
            <person name="Liu H."/>
            <person name="Masuda S."/>
            <person name="Mauel C."/>
            <person name="Medigue C."/>
            <person name="Medina N."/>
            <person name="Mellado R.P."/>
            <person name="Mizuno M."/>
            <person name="Moestl D."/>
            <person name="Nakai S."/>
            <person name="Noback M."/>
            <person name="Noone D."/>
            <person name="O'Reilly M."/>
            <person name="Ogawa K."/>
            <person name="Ogiwara A."/>
            <person name="Oudega B."/>
            <person name="Park S.-H."/>
            <person name="Parro V."/>
            <person name="Pohl T.M."/>
            <person name="Portetelle D."/>
            <person name="Porwollik S."/>
            <person name="Prescott A.M."/>
            <person name="Presecan E."/>
            <person name="Pujic P."/>
            <person name="Purnelle B."/>
            <person name="Rapoport G."/>
            <person name="Rey M."/>
            <person name="Reynolds S."/>
            <person name="Rieger M."/>
            <person name="Rivolta C."/>
            <person name="Rocha E."/>
            <person name="Roche B."/>
            <person name="Rose M."/>
            <person name="Sadaie Y."/>
            <person name="Sato T."/>
            <person name="Scanlan E."/>
            <person name="Schleich S."/>
            <person name="Schroeter R."/>
            <person name="Scoffone F."/>
            <person name="Sekiguchi J."/>
            <person name="Sekowska A."/>
            <person name="Seror S.J."/>
            <person name="Serror P."/>
            <person name="Shin B.-S."/>
            <person name="Soldo B."/>
            <person name="Sorokin A."/>
            <person name="Tacconi E."/>
            <person name="Takagi T."/>
            <person name="Takahashi H."/>
            <person name="Takemaru K."/>
            <person name="Takeuchi M."/>
            <person name="Tamakoshi A."/>
            <person name="Tanaka T."/>
            <person name="Terpstra P."/>
            <person name="Tognoni A."/>
            <person name="Tosato V."/>
            <person name="Uchiyama S."/>
            <person name="Vandenbol M."/>
            <person name="Vannier F."/>
            <person name="Vassarotti A."/>
            <person name="Viari A."/>
            <person name="Wambutt R."/>
            <person name="Wedler E."/>
            <person name="Wedler H."/>
            <person name="Weitzenegger T."/>
            <person name="Winters P."/>
            <person name="Wipat A."/>
            <person name="Yamamoto H."/>
            <person name="Yamane K."/>
            <person name="Yasumoto K."/>
            <person name="Yata K."/>
            <person name="Yoshida K."/>
            <person name="Yoshikawa H.-F."/>
            <person name="Zumstein E."/>
            <person name="Yoshikawa H."/>
            <person name="Danchin A."/>
        </authorList>
    </citation>
    <scope>NUCLEOTIDE SEQUENCE [LARGE SCALE GENOMIC DNA]</scope>
    <source>
        <strain>168</strain>
    </source>
</reference>
<reference key="3">
    <citation type="journal article" date="2009" name="Microbiology">
        <title>From a consortium sequence to a unified sequence: the Bacillus subtilis 168 reference genome a decade later.</title>
        <authorList>
            <person name="Barbe V."/>
            <person name="Cruveiller S."/>
            <person name="Kunst F."/>
            <person name="Lenoble P."/>
            <person name="Meurice G."/>
            <person name="Sekowska A."/>
            <person name="Vallenet D."/>
            <person name="Wang T."/>
            <person name="Moszer I."/>
            <person name="Medigue C."/>
            <person name="Danchin A."/>
        </authorList>
    </citation>
    <scope>SEQUENCE REVISION TO 144</scope>
</reference>
<organism>
    <name type="scientific">Bacillus subtilis (strain 168)</name>
    <dbReference type="NCBI Taxonomy" id="224308"/>
    <lineage>
        <taxon>Bacteria</taxon>
        <taxon>Bacillati</taxon>
        <taxon>Bacillota</taxon>
        <taxon>Bacilli</taxon>
        <taxon>Bacillales</taxon>
        <taxon>Bacillaceae</taxon>
        <taxon>Bacillus</taxon>
    </lineage>
</organism>
<gene>
    <name type="primary">ybbK</name>
    <name type="ordered locus">BSU01720</name>
</gene>
<protein>
    <recommendedName>
        <fullName>Uncharacterized protein YbbK</fullName>
    </recommendedName>
</protein>
<accession>Q45584</accession>
<accession>O08073</accession>
<dbReference type="EMBL" id="AB002150">
    <property type="protein sequence ID" value="BAA19506.1"/>
    <property type="molecule type" value="Genomic_DNA"/>
</dbReference>
<dbReference type="EMBL" id="AL009126">
    <property type="protein sequence ID" value="CAB11948.2"/>
    <property type="molecule type" value="Genomic_DNA"/>
</dbReference>
<dbReference type="PIR" id="F69744">
    <property type="entry name" value="F69744"/>
</dbReference>
<dbReference type="RefSeq" id="NP_388053.2">
    <property type="nucleotide sequence ID" value="NC_000964.3"/>
</dbReference>
<dbReference type="RefSeq" id="WP_003234960.1">
    <property type="nucleotide sequence ID" value="NZ_OZ025638.1"/>
</dbReference>
<dbReference type="SMR" id="Q45584"/>
<dbReference type="FunCoup" id="Q45584">
    <property type="interactions" value="87"/>
</dbReference>
<dbReference type="STRING" id="224308.BSU01720"/>
<dbReference type="PaxDb" id="224308-BSU01720"/>
<dbReference type="EnsemblBacteria" id="CAB11948">
    <property type="protein sequence ID" value="CAB11948"/>
    <property type="gene ID" value="BSU_01720"/>
</dbReference>
<dbReference type="GeneID" id="938877"/>
<dbReference type="KEGG" id="bsu:BSU01720"/>
<dbReference type="PATRIC" id="fig|224308.179.peg.178"/>
<dbReference type="eggNOG" id="COG1683">
    <property type="taxonomic scope" value="Bacteria"/>
</dbReference>
<dbReference type="InParanoid" id="Q45584"/>
<dbReference type="OrthoDB" id="9797779at2"/>
<dbReference type="PhylomeDB" id="Q45584"/>
<dbReference type="BioCyc" id="BSUB:BSU01720-MONOMER"/>
<dbReference type="Proteomes" id="UP000001570">
    <property type="component" value="Chromosome"/>
</dbReference>
<dbReference type="InterPro" id="IPR007553">
    <property type="entry name" value="2-thiour_desulf"/>
</dbReference>
<dbReference type="PANTHER" id="PTHR30087:SF1">
    <property type="entry name" value="HYPOTHETICAL CYTOSOLIC PROTEIN"/>
    <property type="match status" value="1"/>
</dbReference>
<dbReference type="PANTHER" id="PTHR30087">
    <property type="entry name" value="INNER MEMBRANE PROTEIN"/>
    <property type="match status" value="1"/>
</dbReference>
<dbReference type="Pfam" id="PF04463">
    <property type="entry name" value="2-thiour_desulf"/>
    <property type="match status" value="1"/>
</dbReference>
<proteinExistence type="predicted"/>
<evidence type="ECO:0000305" key="1"/>
<keyword id="KW-1185">Reference proteome</keyword>